<dbReference type="EC" id="2.1.1.166" evidence="1"/>
<dbReference type="EMBL" id="CP001025">
    <property type="protein sequence ID" value="ACB63676.1"/>
    <property type="molecule type" value="Genomic_DNA"/>
</dbReference>
<dbReference type="RefSeq" id="WP_012363552.1">
    <property type="nucleotide sequence ID" value="NC_010551.1"/>
</dbReference>
<dbReference type="SMR" id="B1YMW2"/>
<dbReference type="KEGG" id="bac:BamMC406_1185"/>
<dbReference type="HOGENOM" id="CLU_009422_4_1_4"/>
<dbReference type="OrthoDB" id="9790080at2"/>
<dbReference type="Proteomes" id="UP000001680">
    <property type="component" value="Chromosome 1"/>
</dbReference>
<dbReference type="GO" id="GO:0005737">
    <property type="term" value="C:cytoplasm"/>
    <property type="evidence" value="ECO:0007669"/>
    <property type="project" value="UniProtKB-SubCell"/>
</dbReference>
<dbReference type="GO" id="GO:0008650">
    <property type="term" value="F:rRNA (uridine-2'-O-)-methyltransferase activity"/>
    <property type="evidence" value="ECO:0007669"/>
    <property type="project" value="UniProtKB-UniRule"/>
</dbReference>
<dbReference type="FunFam" id="3.40.50.150:FF:000005">
    <property type="entry name" value="Ribosomal RNA large subunit methyltransferase E"/>
    <property type="match status" value="1"/>
</dbReference>
<dbReference type="Gene3D" id="3.40.50.150">
    <property type="entry name" value="Vaccinia Virus protein VP39"/>
    <property type="match status" value="1"/>
</dbReference>
<dbReference type="HAMAP" id="MF_01547">
    <property type="entry name" value="RNA_methyltr_E"/>
    <property type="match status" value="1"/>
</dbReference>
<dbReference type="InterPro" id="IPR050082">
    <property type="entry name" value="RNA_methyltr_RlmE"/>
</dbReference>
<dbReference type="InterPro" id="IPR002877">
    <property type="entry name" value="RNA_MeTrfase_FtsJ_dom"/>
</dbReference>
<dbReference type="InterPro" id="IPR015507">
    <property type="entry name" value="rRNA-MeTfrase_E"/>
</dbReference>
<dbReference type="InterPro" id="IPR029063">
    <property type="entry name" value="SAM-dependent_MTases_sf"/>
</dbReference>
<dbReference type="PANTHER" id="PTHR10920">
    <property type="entry name" value="RIBOSOMAL RNA METHYLTRANSFERASE"/>
    <property type="match status" value="1"/>
</dbReference>
<dbReference type="PANTHER" id="PTHR10920:SF18">
    <property type="entry name" value="RRNA METHYLTRANSFERASE 2, MITOCHONDRIAL"/>
    <property type="match status" value="1"/>
</dbReference>
<dbReference type="Pfam" id="PF01728">
    <property type="entry name" value="FtsJ"/>
    <property type="match status" value="1"/>
</dbReference>
<dbReference type="PIRSF" id="PIRSF005461">
    <property type="entry name" value="23S_rRNA_mtase"/>
    <property type="match status" value="1"/>
</dbReference>
<dbReference type="SUPFAM" id="SSF53335">
    <property type="entry name" value="S-adenosyl-L-methionine-dependent methyltransferases"/>
    <property type="match status" value="1"/>
</dbReference>
<organism>
    <name type="scientific">Burkholderia ambifaria (strain MC40-6)</name>
    <dbReference type="NCBI Taxonomy" id="398577"/>
    <lineage>
        <taxon>Bacteria</taxon>
        <taxon>Pseudomonadati</taxon>
        <taxon>Pseudomonadota</taxon>
        <taxon>Betaproteobacteria</taxon>
        <taxon>Burkholderiales</taxon>
        <taxon>Burkholderiaceae</taxon>
        <taxon>Burkholderia</taxon>
        <taxon>Burkholderia cepacia complex</taxon>
    </lineage>
</organism>
<proteinExistence type="inferred from homology"/>
<keyword id="KW-0963">Cytoplasm</keyword>
<keyword id="KW-0489">Methyltransferase</keyword>
<keyword id="KW-0698">rRNA processing</keyword>
<keyword id="KW-0949">S-adenosyl-L-methionine</keyword>
<keyword id="KW-0808">Transferase</keyword>
<sequence>MAKNRFNQHWLHDHINDPYVKMAQREGYRARAAYKLKEIDEQDKLIRPGQVIVDLGATPGSWSQYARNKLAQGKKRDTQREGGIDGTIIALDLLPMEPIADVHFIQGDFREDDVLRQLEDVLEGRAVDLVISDMAPNLSGVASADAARIEHLCDLALEFAQNHLKPDGALLVKCFHGSGYSQIVEKFKQQFKVVAPRKPKASRDKSSETFILGRQLKQPR</sequence>
<name>RLME_BURA4</name>
<gene>
    <name evidence="1" type="primary">rlmE</name>
    <name evidence="1" type="synonym">ftsJ</name>
    <name evidence="1" type="synonym">rrmJ</name>
    <name type="ordered locus">BamMC406_1185</name>
</gene>
<accession>B1YMW2</accession>
<protein>
    <recommendedName>
        <fullName evidence="1">Ribosomal RNA large subunit methyltransferase E</fullName>
        <ecNumber evidence="1">2.1.1.166</ecNumber>
    </recommendedName>
    <alternativeName>
        <fullName evidence="1">23S rRNA Um2552 methyltransferase</fullName>
    </alternativeName>
    <alternativeName>
        <fullName evidence="1">rRNA (uridine-2'-O-)-methyltransferase</fullName>
    </alternativeName>
</protein>
<evidence type="ECO:0000255" key="1">
    <source>
        <dbReference type="HAMAP-Rule" id="MF_01547"/>
    </source>
</evidence>
<evidence type="ECO:0000256" key="2">
    <source>
        <dbReference type="SAM" id="MobiDB-lite"/>
    </source>
</evidence>
<reference key="1">
    <citation type="submission" date="2008-04" db="EMBL/GenBank/DDBJ databases">
        <title>Complete sequence of chromosome 1 of Burkholderia ambifaria MC40-6.</title>
        <authorList>
            <person name="Copeland A."/>
            <person name="Lucas S."/>
            <person name="Lapidus A."/>
            <person name="Glavina del Rio T."/>
            <person name="Dalin E."/>
            <person name="Tice H."/>
            <person name="Pitluck S."/>
            <person name="Chain P."/>
            <person name="Malfatti S."/>
            <person name="Shin M."/>
            <person name="Vergez L."/>
            <person name="Lang D."/>
            <person name="Schmutz J."/>
            <person name="Larimer F."/>
            <person name="Land M."/>
            <person name="Hauser L."/>
            <person name="Kyrpides N."/>
            <person name="Lykidis A."/>
            <person name="Ramette A."/>
            <person name="Konstantinidis K."/>
            <person name="Tiedje J."/>
            <person name="Richardson P."/>
        </authorList>
    </citation>
    <scope>NUCLEOTIDE SEQUENCE [LARGE SCALE GENOMIC DNA]</scope>
    <source>
        <strain>MC40-6</strain>
    </source>
</reference>
<feature type="chain" id="PRO_1000194978" description="Ribosomal RNA large subunit methyltransferase E">
    <location>
        <begin position="1"/>
        <end position="220"/>
    </location>
</feature>
<feature type="region of interest" description="Disordered" evidence="2">
    <location>
        <begin position="197"/>
        <end position="220"/>
    </location>
</feature>
<feature type="active site" description="Proton acceptor" evidence="1">
    <location>
        <position position="173"/>
    </location>
</feature>
<feature type="binding site" evidence="1">
    <location>
        <position position="60"/>
    </location>
    <ligand>
        <name>S-adenosyl-L-methionine</name>
        <dbReference type="ChEBI" id="CHEBI:59789"/>
    </ligand>
</feature>
<feature type="binding site" evidence="1">
    <location>
        <position position="62"/>
    </location>
    <ligand>
        <name>S-adenosyl-L-methionine</name>
        <dbReference type="ChEBI" id="CHEBI:59789"/>
    </ligand>
</feature>
<feature type="binding site" evidence="1">
    <location>
        <position position="92"/>
    </location>
    <ligand>
        <name>S-adenosyl-L-methionine</name>
        <dbReference type="ChEBI" id="CHEBI:59789"/>
    </ligand>
</feature>
<feature type="binding site" evidence="1">
    <location>
        <position position="108"/>
    </location>
    <ligand>
        <name>S-adenosyl-L-methionine</name>
        <dbReference type="ChEBI" id="CHEBI:59789"/>
    </ligand>
</feature>
<feature type="binding site" evidence="1">
    <location>
        <position position="133"/>
    </location>
    <ligand>
        <name>S-adenosyl-L-methionine</name>
        <dbReference type="ChEBI" id="CHEBI:59789"/>
    </ligand>
</feature>
<comment type="function">
    <text evidence="1">Specifically methylates the uridine in position 2552 of 23S rRNA at the 2'-O position of the ribose in the fully assembled 50S ribosomal subunit.</text>
</comment>
<comment type="catalytic activity">
    <reaction evidence="1">
        <text>uridine(2552) in 23S rRNA + S-adenosyl-L-methionine = 2'-O-methyluridine(2552) in 23S rRNA + S-adenosyl-L-homocysteine + H(+)</text>
        <dbReference type="Rhea" id="RHEA:42720"/>
        <dbReference type="Rhea" id="RHEA-COMP:10202"/>
        <dbReference type="Rhea" id="RHEA-COMP:10203"/>
        <dbReference type="ChEBI" id="CHEBI:15378"/>
        <dbReference type="ChEBI" id="CHEBI:57856"/>
        <dbReference type="ChEBI" id="CHEBI:59789"/>
        <dbReference type="ChEBI" id="CHEBI:65315"/>
        <dbReference type="ChEBI" id="CHEBI:74478"/>
        <dbReference type="EC" id="2.1.1.166"/>
    </reaction>
</comment>
<comment type="subcellular location">
    <subcellularLocation>
        <location evidence="1">Cytoplasm</location>
    </subcellularLocation>
</comment>
<comment type="similarity">
    <text evidence="1">Belongs to the class I-like SAM-binding methyltransferase superfamily. RNA methyltransferase RlmE family.</text>
</comment>